<proteinExistence type="inferred from homology"/>
<accession>Q72MJ5</accession>
<keyword id="KW-1005">Bacterial flagellum biogenesis</keyword>
<keyword id="KW-0143">Chaperone</keyword>
<keyword id="KW-0963">Cytoplasm</keyword>
<keyword id="KW-0810">Translation regulation</keyword>
<dbReference type="EMBL" id="AE016823">
    <property type="protein sequence ID" value="AAS71989.1"/>
    <property type="molecule type" value="Genomic_DNA"/>
</dbReference>
<dbReference type="RefSeq" id="WP_000510649.1">
    <property type="nucleotide sequence ID" value="NC_005823.1"/>
</dbReference>
<dbReference type="SMR" id="Q72MJ5"/>
<dbReference type="GeneID" id="61143311"/>
<dbReference type="KEGG" id="lic:LIC_13449"/>
<dbReference type="HOGENOM" id="CLU_112356_0_2_12"/>
<dbReference type="Proteomes" id="UP000007037">
    <property type="component" value="Chromosome I"/>
</dbReference>
<dbReference type="GO" id="GO:0005737">
    <property type="term" value="C:cytoplasm"/>
    <property type="evidence" value="ECO:0007669"/>
    <property type="project" value="UniProtKB-SubCell"/>
</dbReference>
<dbReference type="GO" id="GO:0044780">
    <property type="term" value="P:bacterial-type flagellum assembly"/>
    <property type="evidence" value="ECO:0007669"/>
    <property type="project" value="UniProtKB-UniRule"/>
</dbReference>
<dbReference type="GO" id="GO:0006417">
    <property type="term" value="P:regulation of translation"/>
    <property type="evidence" value="ECO:0007669"/>
    <property type="project" value="UniProtKB-KW"/>
</dbReference>
<dbReference type="Gene3D" id="2.30.290.10">
    <property type="entry name" value="BH3618-like"/>
    <property type="match status" value="1"/>
</dbReference>
<dbReference type="HAMAP" id="MF_01185">
    <property type="entry name" value="FliW"/>
    <property type="match status" value="1"/>
</dbReference>
<dbReference type="InterPro" id="IPR003775">
    <property type="entry name" value="Flagellar_assembly_factor_FliW"/>
</dbReference>
<dbReference type="InterPro" id="IPR024046">
    <property type="entry name" value="Flagellar_assmbl_FliW_dom_sf"/>
</dbReference>
<dbReference type="NCBIfam" id="NF009793">
    <property type="entry name" value="PRK13285.1-1"/>
    <property type="match status" value="1"/>
</dbReference>
<dbReference type="PANTHER" id="PTHR39190">
    <property type="entry name" value="FLAGELLAR ASSEMBLY FACTOR FLIW"/>
    <property type="match status" value="1"/>
</dbReference>
<dbReference type="PANTHER" id="PTHR39190:SF1">
    <property type="entry name" value="FLAGELLAR ASSEMBLY FACTOR FLIW"/>
    <property type="match status" value="1"/>
</dbReference>
<dbReference type="Pfam" id="PF02623">
    <property type="entry name" value="FliW"/>
    <property type="match status" value="1"/>
</dbReference>
<dbReference type="SUPFAM" id="SSF141457">
    <property type="entry name" value="BH3618-like"/>
    <property type="match status" value="1"/>
</dbReference>
<protein>
    <recommendedName>
        <fullName evidence="1">Flagellar assembly factor FliW</fullName>
    </recommendedName>
</protein>
<comment type="function">
    <text evidence="1">Acts as an anti-CsrA protein, binds CsrA and prevents it from repressing translation of its target genes, one of which is flagellin. Binds to flagellin and participates in the assembly of the flagellum.</text>
</comment>
<comment type="subunit">
    <text evidence="1">Interacts with translational regulator CsrA and flagellin(s).</text>
</comment>
<comment type="subcellular location">
    <subcellularLocation>
        <location evidence="1">Cytoplasm</location>
    </subcellularLocation>
</comment>
<comment type="similarity">
    <text evidence="1">Belongs to the FliW family.</text>
</comment>
<gene>
    <name evidence="1" type="primary">fliW</name>
    <name type="ordered locus">LIC_13449</name>
</gene>
<feature type="chain" id="PRO_0000273001" description="Flagellar assembly factor FliW">
    <location>
        <begin position="1"/>
        <end position="150"/>
    </location>
</feature>
<sequence>MGIEIQTKPFGKMQVSERQILSFPEGLLGFEEYKKFALIEEEEESVFKWLQSTEEVDLAFVVIPPSLFKKEYKPLIPEQELLGIGINEIKESLTLVIVTVPGEDPSMMTANTQGPILINKETLIGKQFISRNESHSVREKIFESAAVEIG</sequence>
<name>FLIW_LEPIC</name>
<evidence type="ECO:0000255" key="1">
    <source>
        <dbReference type="HAMAP-Rule" id="MF_01185"/>
    </source>
</evidence>
<reference key="1">
    <citation type="journal article" date="2004" name="J. Bacteriol.">
        <title>Comparative genomics of two Leptospira interrogans serovars reveals novel insights into physiology and pathogenesis.</title>
        <authorList>
            <person name="Nascimento A.L.T.O."/>
            <person name="Ko A.I."/>
            <person name="Martins E.A.L."/>
            <person name="Monteiro-Vitorello C.B."/>
            <person name="Ho P.L."/>
            <person name="Haake D.A."/>
            <person name="Verjovski-Almeida S."/>
            <person name="Hartskeerl R.A."/>
            <person name="Marques M.V."/>
            <person name="Oliveira M.C."/>
            <person name="Menck C.F.M."/>
            <person name="Leite L.C.C."/>
            <person name="Carrer H."/>
            <person name="Coutinho L.L."/>
            <person name="Degrave W.M."/>
            <person name="Dellagostin O.A."/>
            <person name="El-Dorry H."/>
            <person name="Ferro E.S."/>
            <person name="Ferro M.I.T."/>
            <person name="Furlan L.R."/>
            <person name="Gamberini M."/>
            <person name="Giglioti E.A."/>
            <person name="Goes-Neto A."/>
            <person name="Goldman G.H."/>
            <person name="Goldman M.H.S."/>
            <person name="Harakava R."/>
            <person name="Jeronimo S.M.B."/>
            <person name="Junqueira-de-Azevedo I.L.M."/>
            <person name="Kimura E.T."/>
            <person name="Kuramae E.E."/>
            <person name="Lemos E.G.M."/>
            <person name="Lemos M.V.F."/>
            <person name="Marino C.L."/>
            <person name="Nunes L.R."/>
            <person name="de Oliveira R.C."/>
            <person name="Pereira G.G."/>
            <person name="Reis M.S."/>
            <person name="Schriefer A."/>
            <person name="Siqueira W.J."/>
            <person name="Sommer P."/>
            <person name="Tsai S.M."/>
            <person name="Simpson A.J.G."/>
            <person name="Ferro J.A."/>
            <person name="Camargo L.E.A."/>
            <person name="Kitajima J.P."/>
            <person name="Setubal J.C."/>
            <person name="Van Sluys M.A."/>
        </authorList>
    </citation>
    <scope>NUCLEOTIDE SEQUENCE [LARGE SCALE GENOMIC DNA]</scope>
    <source>
        <strain>Fiocruz L1-130</strain>
    </source>
</reference>
<organism>
    <name type="scientific">Leptospira interrogans serogroup Icterohaemorrhagiae serovar copenhageni (strain Fiocruz L1-130)</name>
    <dbReference type="NCBI Taxonomy" id="267671"/>
    <lineage>
        <taxon>Bacteria</taxon>
        <taxon>Pseudomonadati</taxon>
        <taxon>Spirochaetota</taxon>
        <taxon>Spirochaetia</taxon>
        <taxon>Leptospirales</taxon>
        <taxon>Leptospiraceae</taxon>
        <taxon>Leptospira</taxon>
    </lineage>
</organism>